<dbReference type="EC" id="2.6.1.16" evidence="1"/>
<dbReference type="EMBL" id="U00020">
    <property type="protein sequence ID" value="AAA17307.1"/>
    <property type="molecule type" value="Genomic_DNA"/>
</dbReference>
<dbReference type="EMBL" id="AL583918">
    <property type="protein sequence ID" value="CAC29879.1"/>
    <property type="molecule type" value="Genomic_DNA"/>
</dbReference>
<dbReference type="PIR" id="C86955">
    <property type="entry name" value="C86955"/>
</dbReference>
<dbReference type="PIR" id="S72993">
    <property type="entry name" value="S72993"/>
</dbReference>
<dbReference type="RefSeq" id="NP_301365.1">
    <property type="nucleotide sequence ID" value="NC_002677.1"/>
</dbReference>
<dbReference type="RefSeq" id="WP_010907689.1">
    <property type="nucleotide sequence ID" value="NC_002677.1"/>
</dbReference>
<dbReference type="SMR" id="P40831"/>
<dbReference type="STRING" id="272631.gene:17574190"/>
<dbReference type="KEGG" id="mle:ML0371"/>
<dbReference type="PATRIC" id="fig|272631.5.peg.628"/>
<dbReference type="Leproma" id="ML0371"/>
<dbReference type="eggNOG" id="COG0449">
    <property type="taxonomic scope" value="Bacteria"/>
</dbReference>
<dbReference type="HOGENOM" id="CLU_012520_5_2_11"/>
<dbReference type="OrthoDB" id="9761808at2"/>
<dbReference type="Proteomes" id="UP000000806">
    <property type="component" value="Chromosome"/>
</dbReference>
<dbReference type="GO" id="GO:0005829">
    <property type="term" value="C:cytosol"/>
    <property type="evidence" value="ECO:0007669"/>
    <property type="project" value="TreeGrafter"/>
</dbReference>
<dbReference type="GO" id="GO:0097367">
    <property type="term" value="F:carbohydrate derivative binding"/>
    <property type="evidence" value="ECO:0007669"/>
    <property type="project" value="InterPro"/>
</dbReference>
<dbReference type="GO" id="GO:0004360">
    <property type="term" value="F:glutamine-fructose-6-phosphate transaminase (isomerizing) activity"/>
    <property type="evidence" value="ECO:0007669"/>
    <property type="project" value="UniProtKB-UniRule"/>
</dbReference>
<dbReference type="GO" id="GO:0005975">
    <property type="term" value="P:carbohydrate metabolic process"/>
    <property type="evidence" value="ECO:0007669"/>
    <property type="project" value="UniProtKB-UniRule"/>
</dbReference>
<dbReference type="GO" id="GO:0006002">
    <property type="term" value="P:fructose 6-phosphate metabolic process"/>
    <property type="evidence" value="ECO:0007669"/>
    <property type="project" value="TreeGrafter"/>
</dbReference>
<dbReference type="GO" id="GO:0006487">
    <property type="term" value="P:protein N-linked glycosylation"/>
    <property type="evidence" value="ECO:0007669"/>
    <property type="project" value="TreeGrafter"/>
</dbReference>
<dbReference type="GO" id="GO:0006047">
    <property type="term" value="P:UDP-N-acetylglucosamine metabolic process"/>
    <property type="evidence" value="ECO:0007669"/>
    <property type="project" value="TreeGrafter"/>
</dbReference>
<dbReference type="CDD" id="cd00714">
    <property type="entry name" value="GFAT"/>
    <property type="match status" value="1"/>
</dbReference>
<dbReference type="CDD" id="cd05008">
    <property type="entry name" value="SIS_GlmS_GlmD_1"/>
    <property type="match status" value="1"/>
</dbReference>
<dbReference type="CDD" id="cd05009">
    <property type="entry name" value="SIS_GlmS_GlmD_2"/>
    <property type="match status" value="1"/>
</dbReference>
<dbReference type="FunFam" id="3.40.50.10490:FF:000001">
    <property type="entry name" value="Glutamine--fructose-6-phosphate aminotransferase [isomerizing]"/>
    <property type="match status" value="1"/>
</dbReference>
<dbReference type="FunFam" id="3.40.50.10490:FF:000002">
    <property type="entry name" value="Glutamine--fructose-6-phosphate aminotransferase [isomerizing]"/>
    <property type="match status" value="1"/>
</dbReference>
<dbReference type="FunFam" id="3.60.20.10:FF:000006">
    <property type="entry name" value="Glutamine--fructose-6-phosphate aminotransferase [isomerizing]"/>
    <property type="match status" value="1"/>
</dbReference>
<dbReference type="Gene3D" id="3.40.50.10490">
    <property type="entry name" value="Glucose-6-phosphate isomerase like protein, domain 1"/>
    <property type="match status" value="2"/>
</dbReference>
<dbReference type="Gene3D" id="3.60.20.10">
    <property type="entry name" value="Glutamine Phosphoribosylpyrophosphate, subunit 1, domain 1"/>
    <property type="match status" value="1"/>
</dbReference>
<dbReference type="HAMAP" id="MF_00164">
    <property type="entry name" value="GlmS"/>
    <property type="match status" value="1"/>
</dbReference>
<dbReference type="InterPro" id="IPR017932">
    <property type="entry name" value="GATase_2_dom"/>
</dbReference>
<dbReference type="InterPro" id="IPR005855">
    <property type="entry name" value="GFAT"/>
</dbReference>
<dbReference type="InterPro" id="IPR047084">
    <property type="entry name" value="GFAT_N"/>
</dbReference>
<dbReference type="InterPro" id="IPR035466">
    <property type="entry name" value="GlmS/AgaS_SIS"/>
</dbReference>
<dbReference type="InterPro" id="IPR035490">
    <property type="entry name" value="GlmS/FrlB_SIS"/>
</dbReference>
<dbReference type="InterPro" id="IPR029055">
    <property type="entry name" value="Ntn_hydrolases_N"/>
</dbReference>
<dbReference type="InterPro" id="IPR001347">
    <property type="entry name" value="SIS_dom"/>
</dbReference>
<dbReference type="InterPro" id="IPR046348">
    <property type="entry name" value="SIS_dom_sf"/>
</dbReference>
<dbReference type="NCBIfam" id="TIGR01135">
    <property type="entry name" value="glmS"/>
    <property type="match status" value="1"/>
</dbReference>
<dbReference type="NCBIfam" id="NF001484">
    <property type="entry name" value="PRK00331.1"/>
    <property type="match status" value="1"/>
</dbReference>
<dbReference type="PANTHER" id="PTHR10937">
    <property type="entry name" value="GLUCOSAMINE--FRUCTOSE-6-PHOSPHATE AMINOTRANSFERASE, ISOMERIZING"/>
    <property type="match status" value="1"/>
</dbReference>
<dbReference type="PANTHER" id="PTHR10937:SF0">
    <property type="entry name" value="GLUTAMINE--FRUCTOSE-6-PHOSPHATE TRANSAMINASE (ISOMERIZING)"/>
    <property type="match status" value="1"/>
</dbReference>
<dbReference type="Pfam" id="PF13522">
    <property type="entry name" value="GATase_6"/>
    <property type="match status" value="1"/>
</dbReference>
<dbReference type="Pfam" id="PF01380">
    <property type="entry name" value="SIS"/>
    <property type="match status" value="2"/>
</dbReference>
<dbReference type="SUPFAM" id="SSF56235">
    <property type="entry name" value="N-terminal nucleophile aminohydrolases (Ntn hydrolases)"/>
    <property type="match status" value="1"/>
</dbReference>
<dbReference type="SUPFAM" id="SSF53697">
    <property type="entry name" value="SIS domain"/>
    <property type="match status" value="1"/>
</dbReference>
<dbReference type="PROSITE" id="PS51278">
    <property type="entry name" value="GATASE_TYPE_2"/>
    <property type="match status" value="1"/>
</dbReference>
<dbReference type="PROSITE" id="PS51464">
    <property type="entry name" value="SIS"/>
    <property type="match status" value="2"/>
</dbReference>
<keyword id="KW-0032">Aminotransferase</keyword>
<keyword id="KW-0963">Cytoplasm</keyword>
<keyword id="KW-0315">Glutamine amidotransferase</keyword>
<keyword id="KW-1185">Reference proteome</keyword>
<keyword id="KW-0677">Repeat</keyword>
<keyword id="KW-0808">Transferase</keyword>
<reference key="1">
    <citation type="submission" date="1994-03" db="EMBL/GenBank/DDBJ databases">
        <authorList>
            <person name="Smith D.R."/>
            <person name="Robison K."/>
        </authorList>
    </citation>
    <scope>NUCLEOTIDE SEQUENCE [GENOMIC DNA]</scope>
</reference>
<reference key="2">
    <citation type="journal article" date="2001" name="Nature">
        <title>Massive gene decay in the leprosy bacillus.</title>
        <authorList>
            <person name="Cole S.T."/>
            <person name="Eiglmeier K."/>
            <person name="Parkhill J."/>
            <person name="James K.D."/>
            <person name="Thomson N.R."/>
            <person name="Wheeler P.R."/>
            <person name="Honore N."/>
            <person name="Garnier T."/>
            <person name="Churcher C.M."/>
            <person name="Harris D.E."/>
            <person name="Mungall K.L."/>
            <person name="Basham D."/>
            <person name="Brown D."/>
            <person name="Chillingworth T."/>
            <person name="Connor R."/>
            <person name="Davies R.M."/>
            <person name="Devlin K."/>
            <person name="Duthoy S."/>
            <person name="Feltwell T."/>
            <person name="Fraser A."/>
            <person name="Hamlin N."/>
            <person name="Holroyd S."/>
            <person name="Hornsby T."/>
            <person name="Jagels K."/>
            <person name="Lacroix C."/>
            <person name="Maclean J."/>
            <person name="Moule S."/>
            <person name="Murphy L.D."/>
            <person name="Oliver K."/>
            <person name="Quail M.A."/>
            <person name="Rajandream M.A."/>
            <person name="Rutherford K.M."/>
            <person name="Rutter S."/>
            <person name="Seeger K."/>
            <person name="Simon S."/>
            <person name="Simmonds M."/>
            <person name="Skelton J."/>
            <person name="Squares R."/>
            <person name="Squares S."/>
            <person name="Stevens K."/>
            <person name="Taylor K."/>
            <person name="Whitehead S."/>
            <person name="Woodward J.R."/>
            <person name="Barrell B.G."/>
        </authorList>
    </citation>
    <scope>NUCLEOTIDE SEQUENCE [LARGE SCALE GENOMIC DNA]</scope>
    <source>
        <strain>TN</strain>
    </source>
</reference>
<comment type="function">
    <text evidence="1">Catalyzes the first step in hexosamine metabolism, converting fructose-6P into glucosamine-6P using glutamine as a nitrogen source.</text>
</comment>
<comment type="catalytic activity">
    <reaction evidence="1">
        <text>D-fructose 6-phosphate + L-glutamine = D-glucosamine 6-phosphate + L-glutamate</text>
        <dbReference type="Rhea" id="RHEA:13237"/>
        <dbReference type="ChEBI" id="CHEBI:29985"/>
        <dbReference type="ChEBI" id="CHEBI:58359"/>
        <dbReference type="ChEBI" id="CHEBI:58725"/>
        <dbReference type="ChEBI" id="CHEBI:61527"/>
        <dbReference type="EC" id="2.6.1.16"/>
    </reaction>
</comment>
<comment type="subunit">
    <text evidence="1">Homodimer.</text>
</comment>
<comment type="subcellular location">
    <subcellularLocation>
        <location evidence="1">Cytoplasm</location>
    </subcellularLocation>
</comment>
<gene>
    <name evidence="1" type="primary">glmS</name>
    <name type="ordered locus">ML0371</name>
    <name type="ORF">B229_C3_238</name>
</gene>
<proteinExistence type="inferred from homology"/>
<organism>
    <name type="scientific">Mycobacterium leprae (strain TN)</name>
    <dbReference type="NCBI Taxonomy" id="272631"/>
    <lineage>
        <taxon>Bacteria</taxon>
        <taxon>Bacillati</taxon>
        <taxon>Actinomycetota</taxon>
        <taxon>Actinomycetes</taxon>
        <taxon>Mycobacteriales</taxon>
        <taxon>Mycobacteriaceae</taxon>
        <taxon>Mycobacterium</taxon>
    </lineage>
</organism>
<sequence>MCGLVGYVGQRPACGVVMDALRRMEYRGYDSSGIALINGSAKSGNLTVRRRAGRLSNLESVLAEMVPASLAGNVGLGHIRWATHGRPTDRNAHPHRDATGKIAVVHNGIIENFPSLRHELEIAGVEFVSDTDTEVAVHLVAQAYCAGETAGDFVGSVLAVLRRLQGHFTLVFANADEPGTIVAARRSTPLVLGIGDGEMFVGSDVAAFIEHTRQAVELGQDQAVVITADGYRISDFDGNDDAVNARTFHIDWDLAAAEKGGYEYFMLKEIAEQPDAVVDTLLGHFTGGRIVLDEQRLSDQELREIDKVFVVACGTAYHSGLLAKYTIEHWTRLPVEVELASEFRYRDPVLDRSTLVVAISQSGETADTLEAVRHAKEQKAKVLAICNTNGSQIPRECDAVLYTRAGPEIGVASTKTFLAQVAANYLLGLALAQARGTKYPDEVQREYRELEAMPDLVARVIAGMGPVADLAYRFAQSTTVLFLGRHVGYPVALEGALKLKELAYMHAEGFAAGELKHGPIALIEENLPVIVVMPSPKGSAMLHAKLLSNIREIQTRGAVTIVIAEEGDDTVRLYADHLIELPAVSTLLQPLLSTIPLQVFAASVAQARGYDVDKPRNLAKSVTVE</sequence>
<name>GLMS_MYCLE</name>
<protein>
    <recommendedName>
        <fullName evidence="1">Glutamine--fructose-6-phosphate aminotransferase [isomerizing]</fullName>
        <ecNumber evidence="1">2.6.1.16</ecNumber>
    </recommendedName>
    <alternativeName>
        <fullName evidence="1">D-fructose-6-phosphate amidotransferase</fullName>
    </alternativeName>
    <alternativeName>
        <fullName evidence="1">GFAT</fullName>
    </alternativeName>
    <alternativeName>
        <fullName evidence="1">Glucosamine-6-phosphate synthase</fullName>
    </alternativeName>
    <alternativeName>
        <fullName evidence="1">Hexosephosphate aminotransferase</fullName>
    </alternativeName>
    <alternativeName>
        <fullName evidence="1">L-glutamine--D-fructose-6-phosphate amidotransferase</fullName>
    </alternativeName>
</protein>
<feature type="initiator methionine" description="Removed" evidence="1">
    <location>
        <position position="1"/>
    </location>
</feature>
<feature type="chain" id="PRO_0000135354" description="Glutamine--fructose-6-phosphate aminotransferase [isomerizing]">
    <location>
        <begin position="2"/>
        <end position="625"/>
    </location>
</feature>
<feature type="domain" description="Glutamine amidotransferase type-2" evidence="1">
    <location>
        <begin position="2"/>
        <end position="229"/>
    </location>
</feature>
<feature type="domain" description="SIS 1" evidence="1">
    <location>
        <begin position="298"/>
        <end position="437"/>
    </location>
</feature>
<feature type="domain" description="SIS 2" evidence="1">
    <location>
        <begin position="470"/>
        <end position="615"/>
    </location>
</feature>
<feature type="active site" description="Nucleophile; for GATase activity" evidence="1">
    <location>
        <position position="2"/>
    </location>
</feature>
<feature type="active site" description="For Fru-6P isomerization activity" evidence="1">
    <location>
        <position position="620"/>
    </location>
</feature>
<feature type="sequence conflict" description="In Ref. 1; AAA17307." evidence="2" ref="1">
    <original>TR</original>
    <variation>IS</variation>
    <location>
        <begin position="555"/>
        <end position="556"/>
    </location>
</feature>
<evidence type="ECO:0000255" key="1">
    <source>
        <dbReference type="HAMAP-Rule" id="MF_00164"/>
    </source>
</evidence>
<evidence type="ECO:0000305" key="2"/>
<accession>P40831</accession>